<dbReference type="EC" id="2.8.1.6" evidence="1"/>
<dbReference type="EMBL" id="CP000857">
    <property type="protein sequence ID" value="ACN44964.1"/>
    <property type="molecule type" value="Genomic_DNA"/>
</dbReference>
<dbReference type="RefSeq" id="WP_000090729.1">
    <property type="nucleotide sequence ID" value="NC_012125.1"/>
</dbReference>
<dbReference type="SMR" id="C0PWY2"/>
<dbReference type="KEGG" id="sei:SPC_0790"/>
<dbReference type="HOGENOM" id="CLU_033172_1_2_6"/>
<dbReference type="UniPathway" id="UPA00078">
    <property type="reaction ID" value="UER00162"/>
</dbReference>
<dbReference type="Proteomes" id="UP000001599">
    <property type="component" value="Chromosome"/>
</dbReference>
<dbReference type="GO" id="GO:0051537">
    <property type="term" value="F:2 iron, 2 sulfur cluster binding"/>
    <property type="evidence" value="ECO:0007669"/>
    <property type="project" value="UniProtKB-KW"/>
</dbReference>
<dbReference type="GO" id="GO:0051539">
    <property type="term" value="F:4 iron, 4 sulfur cluster binding"/>
    <property type="evidence" value="ECO:0007669"/>
    <property type="project" value="UniProtKB-KW"/>
</dbReference>
<dbReference type="GO" id="GO:0004076">
    <property type="term" value="F:biotin synthase activity"/>
    <property type="evidence" value="ECO:0007669"/>
    <property type="project" value="UniProtKB-UniRule"/>
</dbReference>
<dbReference type="GO" id="GO:0005506">
    <property type="term" value="F:iron ion binding"/>
    <property type="evidence" value="ECO:0007669"/>
    <property type="project" value="UniProtKB-UniRule"/>
</dbReference>
<dbReference type="GO" id="GO:0009102">
    <property type="term" value="P:biotin biosynthetic process"/>
    <property type="evidence" value="ECO:0007669"/>
    <property type="project" value="UniProtKB-UniRule"/>
</dbReference>
<dbReference type="CDD" id="cd01335">
    <property type="entry name" value="Radical_SAM"/>
    <property type="match status" value="1"/>
</dbReference>
<dbReference type="FunFam" id="3.20.20.70:FF:000011">
    <property type="entry name" value="Biotin synthase"/>
    <property type="match status" value="1"/>
</dbReference>
<dbReference type="Gene3D" id="3.20.20.70">
    <property type="entry name" value="Aldolase class I"/>
    <property type="match status" value="1"/>
</dbReference>
<dbReference type="HAMAP" id="MF_01694">
    <property type="entry name" value="BioB"/>
    <property type="match status" value="1"/>
</dbReference>
<dbReference type="InterPro" id="IPR013785">
    <property type="entry name" value="Aldolase_TIM"/>
</dbReference>
<dbReference type="InterPro" id="IPR010722">
    <property type="entry name" value="BATS_dom"/>
</dbReference>
<dbReference type="InterPro" id="IPR002684">
    <property type="entry name" value="Biotin_synth/BioAB"/>
</dbReference>
<dbReference type="InterPro" id="IPR024177">
    <property type="entry name" value="Biotin_synthase"/>
</dbReference>
<dbReference type="InterPro" id="IPR006638">
    <property type="entry name" value="Elp3/MiaA/NifB-like_rSAM"/>
</dbReference>
<dbReference type="InterPro" id="IPR007197">
    <property type="entry name" value="rSAM"/>
</dbReference>
<dbReference type="NCBIfam" id="TIGR00433">
    <property type="entry name" value="bioB"/>
    <property type="match status" value="1"/>
</dbReference>
<dbReference type="PANTHER" id="PTHR22976">
    <property type="entry name" value="BIOTIN SYNTHASE"/>
    <property type="match status" value="1"/>
</dbReference>
<dbReference type="PANTHER" id="PTHR22976:SF2">
    <property type="entry name" value="BIOTIN SYNTHASE, MITOCHONDRIAL"/>
    <property type="match status" value="1"/>
</dbReference>
<dbReference type="Pfam" id="PF06968">
    <property type="entry name" value="BATS"/>
    <property type="match status" value="1"/>
</dbReference>
<dbReference type="Pfam" id="PF04055">
    <property type="entry name" value="Radical_SAM"/>
    <property type="match status" value="1"/>
</dbReference>
<dbReference type="PIRSF" id="PIRSF001619">
    <property type="entry name" value="Biotin_synth"/>
    <property type="match status" value="1"/>
</dbReference>
<dbReference type="SFLD" id="SFLDF00272">
    <property type="entry name" value="biotin_synthase"/>
    <property type="match status" value="1"/>
</dbReference>
<dbReference type="SFLD" id="SFLDS00029">
    <property type="entry name" value="Radical_SAM"/>
    <property type="match status" value="1"/>
</dbReference>
<dbReference type="SMART" id="SM00876">
    <property type="entry name" value="BATS"/>
    <property type="match status" value="1"/>
</dbReference>
<dbReference type="SMART" id="SM00729">
    <property type="entry name" value="Elp3"/>
    <property type="match status" value="1"/>
</dbReference>
<dbReference type="SUPFAM" id="SSF102114">
    <property type="entry name" value="Radical SAM enzymes"/>
    <property type="match status" value="1"/>
</dbReference>
<dbReference type="PROSITE" id="PS51918">
    <property type="entry name" value="RADICAL_SAM"/>
    <property type="match status" value="1"/>
</dbReference>
<organism>
    <name type="scientific">Salmonella paratyphi C (strain RKS4594)</name>
    <dbReference type="NCBI Taxonomy" id="476213"/>
    <lineage>
        <taxon>Bacteria</taxon>
        <taxon>Pseudomonadati</taxon>
        <taxon>Pseudomonadota</taxon>
        <taxon>Gammaproteobacteria</taxon>
        <taxon>Enterobacterales</taxon>
        <taxon>Enterobacteriaceae</taxon>
        <taxon>Salmonella</taxon>
    </lineage>
</organism>
<keyword id="KW-0001">2Fe-2S</keyword>
<keyword id="KW-0004">4Fe-4S</keyword>
<keyword id="KW-0093">Biotin biosynthesis</keyword>
<keyword id="KW-0408">Iron</keyword>
<keyword id="KW-0411">Iron-sulfur</keyword>
<keyword id="KW-0479">Metal-binding</keyword>
<keyword id="KW-0949">S-adenosyl-L-methionine</keyword>
<keyword id="KW-0808">Transferase</keyword>
<feature type="chain" id="PRO_0000381605" description="Biotin synthase">
    <location>
        <begin position="1"/>
        <end position="346"/>
    </location>
</feature>
<feature type="domain" description="Radical SAM core" evidence="2">
    <location>
        <begin position="38"/>
        <end position="256"/>
    </location>
</feature>
<feature type="binding site" evidence="1">
    <location>
        <position position="53"/>
    </location>
    <ligand>
        <name>[4Fe-4S] cluster</name>
        <dbReference type="ChEBI" id="CHEBI:49883"/>
        <note>4Fe-4S-S-AdoMet</note>
    </ligand>
</feature>
<feature type="binding site" evidence="1">
    <location>
        <position position="57"/>
    </location>
    <ligand>
        <name>[4Fe-4S] cluster</name>
        <dbReference type="ChEBI" id="CHEBI:49883"/>
        <note>4Fe-4S-S-AdoMet</note>
    </ligand>
</feature>
<feature type="binding site" evidence="1">
    <location>
        <position position="60"/>
    </location>
    <ligand>
        <name>[4Fe-4S] cluster</name>
        <dbReference type="ChEBI" id="CHEBI:49883"/>
        <note>4Fe-4S-S-AdoMet</note>
    </ligand>
</feature>
<feature type="binding site" evidence="1">
    <location>
        <position position="97"/>
    </location>
    <ligand>
        <name>[2Fe-2S] cluster</name>
        <dbReference type="ChEBI" id="CHEBI:190135"/>
    </ligand>
</feature>
<feature type="binding site" evidence="1">
    <location>
        <position position="128"/>
    </location>
    <ligand>
        <name>[2Fe-2S] cluster</name>
        <dbReference type="ChEBI" id="CHEBI:190135"/>
    </ligand>
</feature>
<feature type="binding site" evidence="1">
    <location>
        <position position="188"/>
    </location>
    <ligand>
        <name>[2Fe-2S] cluster</name>
        <dbReference type="ChEBI" id="CHEBI:190135"/>
    </ligand>
</feature>
<feature type="binding site" evidence="1">
    <location>
        <position position="260"/>
    </location>
    <ligand>
        <name>[2Fe-2S] cluster</name>
        <dbReference type="ChEBI" id="CHEBI:190135"/>
    </ligand>
</feature>
<accession>C0PWY2</accession>
<reference key="1">
    <citation type="journal article" date="2009" name="PLoS ONE">
        <title>Salmonella paratyphi C: genetic divergence from Salmonella choleraesuis and pathogenic convergence with Salmonella typhi.</title>
        <authorList>
            <person name="Liu W.-Q."/>
            <person name="Feng Y."/>
            <person name="Wang Y."/>
            <person name="Zou Q.-H."/>
            <person name="Chen F."/>
            <person name="Guo J.-T."/>
            <person name="Peng Y.-H."/>
            <person name="Jin Y."/>
            <person name="Li Y.-G."/>
            <person name="Hu S.-N."/>
            <person name="Johnston R.N."/>
            <person name="Liu G.-R."/>
            <person name="Liu S.-L."/>
        </authorList>
    </citation>
    <scope>NUCLEOTIDE SEQUENCE [LARGE SCALE GENOMIC DNA]</scope>
    <source>
        <strain>RKS4594</strain>
    </source>
</reference>
<sequence>MARHPRWTLSQVTELFEKPLLELLFEAQQIHRQHFDPQQVQVSTLLSIKTGACPEDCKYCPQSSRYKTGLEAERLMEVEQVLDSARKAKNAGSTRFCMGAAWRNPHERDMPYLEKIVQGVKAMGLETCMTLGMLNESQAQRLANAGLDYYNHNLDTSPEFYGNIITTRTYQERLDTLEKVREAGIKVCSGGIVGLGETVTDRAGLLLQLANLPTPPESVPINMLVKVKGTPLADNDDVDAFDFIRTIAVARIMMPTSYVRLSAGREQMNEQTQAMCFMAGANSIFYGCKLLTTPNPAEDKDLQLFRKLGLNPQQTRVLAGDNEQQQRLEQTLMTPDTDDYYNAAAL</sequence>
<comment type="function">
    <text evidence="1">Catalyzes the conversion of dethiobiotin (DTB) to biotin by the insertion of a sulfur atom into dethiobiotin via a radical-based mechanism.</text>
</comment>
<comment type="catalytic activity">
    <reaction evidence="1">
        <text>(4R,5S)-dethiobiotin + (sulfur carrier)-SH + 2 reduced [2Fe-2S]-[ferredoxin] + 2 S-adenosyl-L-methionine = (sulfur carrier)-H + biotin + 2 5'-deoxyadenosine + 2 L-methionine + 2 oxidized [2Fe-2S]-[ferredoxin]</text>
        <dbReference type="Rhea" id="RHEA:22060"/>
        <dbReference type="Rhea" id="RHEA-COMP:10000"/>
        <dbReference type="Rhea" id="RHEA-COMP:10001"/>
        <dbReference type="Rhea" id="RHEA-COMP:14737"/>
        <dbReference type="Rhea" id="RHEA-COMP:14739"/>
        <dbReference type="ChEBI" id="CHEBI:17319"/>
        <dbReference type="ChEBI" id="CHEBI:29917"/>
        <dbReference type="ChEBI" id="CHEBI:33737"/>
        <dbReference type="ChEBI" id="CHEBI:33738"/>
        <dbReference type="ChEBI" id="CHEBI:57586"/>
        <dbReference type="ChEBI" id="CHEBI:57844"/>
        <dbReference type="ChEBI" id="CHEBI:59789"/>
        <dbReference type="ChEBI" id="CHEBI:64428"/>
        <dbReference type="ChEBI" id="CHEBI:149473"/>
        <dbReference type="EC" id="2.8.1.6"/>
    </reaction>
</comment>
<comment type="cofactor">
    <cofactor evidence="1">
        <name>[4Fe-4S] cluster</name>
        <dbReference type="ChEBI" id="CHEBI:49883"/>
    </cofactor>
    <text evidence="1">Binds 1 [4Fe-4S] cluster. The cluster is coordinated with 3 cysteines and an exchangeable S-adenosyl-L-methionine.</text>
</comment>
<comment type="cofactor">
    <cofactor evidence="1">
        <name>[2Fe-2S] cluster</name>
        <dbReference type="ChEBI" id="CHEBI:190135"/>
    </cofactor>
    <text evidence="1">Binds 1 [2Fe-2S] cluster. The cluster is coordinated with 3 cysteines and 1 arginine.</text>
</comment>
<comment type="pathway">
    <text evidence="1">Cofactor biosynthesis; biotin biosynthesis; biotin from 7,8-diaminononanoate: step 2/2.</text>
</comment>
<comment type="subunit">
    <text evidence="1">Homodimer.</text>
</comment>
<comment type="similarity">
    <text evidence="1">Belongs to the radical SAM superfamily. Biotin synthase family.</text>
</comment>
<name>BIOB_SALPC</name>
<evidence type="ECO:0000255" key="1">
    <source>
        <dbReference type="HAMAP-Rule" id="MF_01694"/>
    </source>
</evidence>
<evidence type="ECO:0000255" key="2">
    <source>
        <dbReference type="PROSITE-ProRule" id="PRU01266"/>
    </source>
</evidence>
<proteinExistence type="inferred from homology"/>
<protein>
    <recommendedName>
        <fullName evidence="1">Biotin synthase</fullName>
        <ecNumber evidence="1">2.8.1.6</ecNumber>
    </recommendedName>
</protein>
<gene>
    <name evidence="1" type="primary">bioB</name>
    <name type="ordered locus">SPC_0790</name>
</gene>